<organism>
    <name type="scientific">Mycobacterium tuberculosis (strain ATCC 25618 / H37Rv)</name>
    <dbReference type="NCBI Taxonomy" id="83332"/>
    <lineage>
        <taxon>Bacteria</taxon>
        <taxon>Bacillati</taxon>
        <taxon>Actinomycetota</taxon>
        <taxon>Actinomycetes</taxon>
        <taxon>Mycobacteriales</taxon>
        <taxon>Mycobacteriaceae</taxon>
        <taxon>Mycobacterium</taxon>
        <taxon>Mycobacterium tuberculosis complex</taxon>
    </lineage>
</organism>
<sequence>MSANDRRDRRVRVAVVFGGRSNEHAISCVSAGSILRNLDSRRFDVIAVGITPAGSWVLTDANPDALTITNRELPQVKSGSGTELALPADPRRGGQLVSLPPGAGEVLESVDVVFPVLHGPYGEDGTIQGLLELAGVPYVGAGVLASAVGMDKEFTKKLLAADGLPVGAYAVLRPPRSTLHRQECERLGLPVFVKPARGGSSIGVSRVSSWDQLPAAVARARRHDPKVIVEAAISGRELECGVLEMPDGTLEASTLGEIRVAGVRGREDSFYDFATKYLDDAAELDVPAKVDDQVAEAIRQLAIRAFAAIDCRGLARVDFFLTDDGPVINEINTMPGFTTISMYPRMWAASGVDYPTLLATMIETTLARGVGLH</sequence>
<evidence type="ECO:0000250" key="1"/>
<evidence type="ECO:0000255" key="2">
    <source>
        <dbReference type="HAMAP-Rule" id="MF_00047"/>
    </source>
</evidence>
<evidence type="ECO:0000269" key="3">
    <source>
    </source>
</evidence>
<evidence type="ECO:0000269" key="4">
    <source>
    </source>
</evidence>
<evidence type="ECO:0000303" key="5">
    <source>
    </source>
</evidence>
<evidence type="ECO:0000303" key="6">
    <source>
    </source>
</evidence>
<evidence type="ECO:0000305" key="7">
    <source>
    </source>
</evidence>
<evidence type="ECO:0000305" key="8">
    <source>
    </source>
</evidence>
<evidence type="ECO:0007829" key="9">
    <source>
        <dbReference type="PDB" id="3LWB"/>
    </source>
</evidence>
<feature type="chain" id="PRO_0000177844" description="D-alanine--D-alanine ligase">
    <location>
        <begin position="1"/>
        <end position="373"/>
    </location>
</feature>
<feature type="domain" description="ATP-grasp" evidence="2">
    <location>
        <begin position="156"/>
        <end position="363"/>
    </location>
</feature>
<feature type="binding site" evidence="2">
    <location>
        <begin position="184"/>
        <end position="239"/>
    </location>
    <ligand>
        <name>ATP</name>
        <dbReference type="ChEBI" id="CHEBI:30616"/>
    </ligand>
</feature>
<feature type="binding site" evidence="2">
    <location>
        <position position="318"/>
    </location>
    <ligand>
        <name>Mg(2+)</name>
        <dbReference type="ChEBI" id="CHEBI:18420"/>
        <label>1</label>
    </ligand>
</feature>
<feature type="binding site" evidence="2">
    <location>
        <position position="330"/>
    </location>
    <ligand>
        <name>Mg(2+)</name>
        <dbReference type="ChEBI" id="CHEBI:18420"/>
        <label>1</label>
    </ligand>
</feature>
<feature type="binding site" evidence="2">
    <location>
        <position position="330"/>
    </location>
    <ligand>
        <name>Mg(2+)</name>
        <dbReference type="ChEBI" id="CHEBI:18420"/>
        <label>2</label>
    </ligand>
</feature>
<feature type="binding site" evidence="2">
    <location>
        <position position="332"/>
    </location>
    <ligand>
        <name>Mg(2+)</name>
        <dbReference type="ChEBI" id="CHEBI:18420"/>
        <label>2</label>
    </ligand>
</feature>
<feature type="strand" evidence="9">
    <location>
        <begin position="11"/>
        <end position="18"/>
    </location>
</feature>
<feature type="helix" evidence="9">
    <location>
        <begin position="26"/>
        <end position="37"/>
    </location>
</feature>
<feature type="turn" evidence="9">
    <location>
        <begin position="40"/>
        <end position="42"/>
    </location>
</feature>
<feature type="strand" evidence="9">
    <location>
        <begin position="43"/>
        <end position="50"/>
    </location>
</feature>
<feature type="strand" evidence="9">
    <location>
        <begin position="56"/>
        <end position="59"/>
    </location>
</feature>
<feature type="helix" evidence="9">
    <location>
        <begin position="103"/>
        <end position="108"/>
    </location>
</feature>
<feature type="strand" evidence="9">
    <location>
        <begin position="111"/>
        <end position="115"/>
    </location>
</feature>
<feature type="helix" evidence="9">
    <location>
        <begin position="126"/>
        <end position="134"/>
    </location>
</feature>
<feature type="strand" evidence="9">
    <location>
        <begin position="138"/>
        <end position="141"/>
    </location>
</feature>
<feature type="helix" evidence="9">
    <location>
        <begin position="143"/>
        <end position="150"/>
    </location>
</feature>
<feature type="helix" evidence="9">
    <location>
        <begin position="152"/>
        <end position="161"/>
    </location>
</feature>
<feature type="strand" evidence="9">
    <location>
        <begin position="169"/>
        <end position="172"/>
    </location>
</feature>
<feature type="helix" evidence="9">
    <location>
        <begin position="181"/>
        <end position="187"/>
    </location>
</feature>
<feature type="strand" evidence="9">
    <location>
        <begin position="191"/>
        <end position="197"/>
    </location>
</feature>
<feature type="turn" evidence="9">
    <location>
        <begin position="200"/>
        <end position="203"/>
    </location>
</feature>
<feature type="strand" evidence="9">
    <location>
        <begin position="205"/>
        <end position="207"/>
    </location>
</feature>
<feature type="helix" evidence="9">
    <location>
        <begin position="210"/>
        <end position="212"/>
    </location>
</feature>
<feature type="helix" evidence="9">
    <location>
        <begin position="213"/>
        <end position="221"/>
    </location>
</feature>
<feature type="strand" evidence="9">
    <location>
        <begin position="225"/>
        <end position="231"/>
    </location>
</feature>
<feature type="strand" evidence="9">
    <location>
        <begin position="234"/>
        <end position="244"/>
    </location>
</feature>
<feature type="strand" evidence="9">
    <location>
        <begin position="250"/>
        <end position="252"/>
    </location>
</feature>
<feature type="strand" evidence="9">
    <location>
        <begin position="256"/>
        <end position="259"/>
    </location>
</feature>
<feature type="strand" evidence="9">
    <location>
        <begin position="266"/>
        <end position="271"/>
    </location>
</feature>
<feature type="helix" evidence="9">
    <location>
        <begin position="273"/>
        <end position="277"/>
    </location>
</feature>
<feature type="strand" evidence="9">
    <location>
        <begin position="283"/>
        <end position="287"/>
    </location>
</feature>
<feature type="helix" evidence="9">
    <location>
        <begin position="292"/>
        <end position="308"/>
    </location>
</feature>
<feature type="strand" evidence="9">
    <location>
        <begin position="313"/>
        <end position="322"/>
    </location>
</feature>
<feature type="strand" evidence="9">
    <location>
        <begin position="325"/>
        <end position="334"/>
    </location>
</feature>
<feature type="helix" evidence="9">
    <location>
        <begin position="342"/>
        <end position="349"/>
    </location>
</feature>
<feature type="helix" evidence="9">
    <location>
        <begin position="354"/>
        <end position="367"/>
    </location>
</feature>
<dbReference type="EC" id="6.3.2.4" evidence="2 3 4"/>
<dbReference type="EMBL" id="AL123456">
    <property type="protein sequence ID" value="CCP45786.1"/>
    <property type="molecule type" value="Genomic_DNA"/>
</dbReference>
<dbReference type="PIR" id="B70673">
    <property type="entry name" value="B70673"/>
</dbReference>
<dbReference type="RefSeq" id="NP_217497.1">
    <property type="nucleotide sequence ID" value="NC_000962.3"/>
</dbReference>
<dbReference type="RefSeq" id="WP_003912011.1">
    <property type="nucleotide sequence ID" value="NZ_NVQJ01000099.1"/>
</dbReference>
<dbReference type="PDB" id="3LWB">
    <property type="method" value="X-ray"/>
    <property type="resolution" value="2.10 A"/>
    <property type="chains" value="A/B=1-373"/>
</dbReference>
<dbReference type="PDBsum" id="3LWB"/>
<dbReference type="SMR" id="P9WP31"/>
<dbReference type="FunCoup" id="P9WP31">
    <property type="interactions" value="38"/>
</dbReference>
<dbReference type="STRING" id="83332.Rv2981c"/>
<dbReference type="ChEMBL" id="CHEMBL2030"/>
<dbReference type="DrugCentral" id="P9WP31"/>
<dbReference type="PaxDb" id="83332-Rv2981c"/>
<dbReference type="DNASU" id="888415"/>
<dbReference type="GeneID" id="888415"/>
<dbReference type="KEGG" id="mtu:Rv2981c"/>
<dbReference type="KEGG" id="mtv:RVBD_2981c"/>
<dbReference type="TubercuList" id="Rv2981c"/>
<dbReference type="eggNOG" id="COG1181">
    <property type="taxonomic scope" value="Bacteria"/>
</dbReference>
<dbReference type="InParanoid" id="P9WP31"/>
<dbReference type="OrthoDB" id="9813261at2"/>
<dbReference type="PhylomeDB" id="P9WP31"/>
<dbReference type="BioCyc" id="MetaCyc:G185E-7236-MONOMER"/>
<dbReference type="BRENDA" id="6.3.2.4">
    <property type="organism ID" value="3445"/>
</dbReference>
<dbReference type="UniPathway" id="UPA00219"/>
<dbReference type="EvolutionaryTrace" id="P9WP31"/>
<dbReference type="PRO" id="PR:P9WP31"/>
<dbReference type="Proteomes" id="UP000001584">
    <property type="component" value="Chromosome"/>
</dbReference>
<dbReference type="GO" id="GO:0005829">
    <property type="term" value="C:cytosol"/>
    <property type="evidence" value="ECO:0000318"/>
    <property type="project" value="GO_Central"/>
</dbReference>
<dbReference type="GO" id="GO:0005886">
    <property type="term" value="C:plasma membrane"/>
    <property type="evidence" value="ECO:0007005"/>
    <property type="project" value="MTBBASE"/>
</dbReference>
<dbReference type="GO" id="GO:0005524">
    <property type="term" value="F:ATP binding"/>
    <property type="evidence" value="ECO:0007669"/>
    <property type="project" value="UniProtKB-KW"/>
</dbReference>
<dbReference type="GO" id="GO:0008716">
    <property type="term" value="F:D-alanine-D-alanine ligase activity"/>
    <property type="evidence" value="ECO:0000314"/>
    <property type="project" value="MTBBASE"/>
</dbReference>
<dbReference type="GO" id="GO:0046872">
    <property type="term" value="F:metal ion binding"/>
    <property type="evidence" value="ECO:0007669"/>
    <property type="project" value="UniProtKB-KW"/>
</dbReference>
<dbReference type="GO" id="GO:0071555">
    <property type="term" value="P:cell wall organization"/>
    <property type="evidence" value="ECO:0007669"/>
    <property type="project" value="UniProtKB-KW"/>
</dbReference>
<dbReference type="GO" id="GO:0009252">
    <property type="term" value="P:peptidoglycan biosynthetic process"/>
    <property type="evidence" value="ECO:0000314"/>
    <property type="project" value="MTBBASE"/>
</dbReference>
<dbReference type="GO" id="GO:0008360">
    <property type="term" value="P:regulation of cell shape"/>
    <property type="evidence" value="ECO:0007669"/>
    <property type="project" value="UniProtKB-KW"/>
</dbReference>
<dbReference type="FunFam" id="3.30.1490.20:FF:000039">
    <property type="entry name" value="D-alanine--D-alanine ligase"/>
    <property type="match status" value="1"/>
</dbReference>
<dbReference type="FunFam" id="3.30.470.20:FF:000008">
    <property type="entry name" value="D-alanine--D-alanine ligase"/>
    <property type="match status" value="1"/>
</dbReference>
<dbReference type="Gene3D" id="3.40.50.20">
    <property type="match status" value="1"/>
</dbReference>
<dbReference type="Gene3D" id="3.30.1490.20">
    <property type="entry name" value="ATP-grasp fold, A domain"/>
    <property type="match status" value="1"/>
</dbReference>
<dbReference type="Gene3D" id="3.30.470.20">
    <property type="entry name" value="ATP-grasp fold, B domain"/>
    <property type="match status" value="1"/>
</dbReference>
<dbReference type="HAMAP" id="MF_00047">
    <property type="entry name" value="Dala_Dala_lig"/>
    <property type="match status" value="1"/>
</dbReference>
<dbReference type="InterPro" id="IPR011761">
    <property type="entry name" value="ATP-grasp"/>
</dbReference>
<dbReference type="InterPro" id="IPR013815">
    <property type="entry name" value="ATP_grasp_subdomain_1"/>
</dbReference>
<dbReference type="InterPro" id="IPR000291">
    <property type="entry name" value="D-Ala_lig_Van_CS"/>
</dbReference>
<dbReference type="InterPro" id="IPR005905">
    <property type="entry name" value="D_ala_D_ala"/>
</dbReference>
<dbReference type="InterPro" id="IPR011095">
    <property type="entry name" value="Dala_Dala_lig_C"/>
</dbReference>
<dbReference type="InterPro" id="IPR011127">
    <property type="entry name" value="Dala_Dala_lig_N"/>
</dbReference>
<dbReference type="InterPro" id="IPR016185">
    <property type="entry name" value="PreATP-grasp_dom_sf"/>
</dbReference>
<dbReference type="NCBIfam" id="TIGR01205">
    <property type="entry name" value="D_ala_D_alaTIGR"/>
    <property type="match status" value="1"/>
</dbReference>
<dbReference type="NCBIfam" id="NF002378">
    <property type="entry name" value="PRK01372.1"/>
    <property type="match status" value="1"/>
</dbReference>
<dbReference type="NCBIfam" id="NF002528">
    <property type="entry name" value="PRK01966.1-4"/>
    <property type="match status" value="1"/>
</dbReference>
<dbReference type="PANTHER" id="PTHR23132">
    <property type="entry name" value="D-ALANINE--D-ALANINE LIGASE"/>
    <property type="match status" value="1"/>
</dbReference>
<dbReference type="PANTHER" id="PTHR23132:SF25">
    <property type="entry name" value="D-ALANINE--D-ALANINE LIGASE A"/>
    <property type="match status" value="1"/>
</dbReference>
<dbReference type="Pfam" id="PF07478">
    <property type="entry name" value="Dala_Dala_lig_C"/>
    <property type="match status" value="1"/>
</dbReference>
<dbReference type="Pfam" id="PF01820">
    <property type="entry name" value="Dala_Dala_lig_N"/>
    <property type="match status" value="1"/>
</dbReference>
<dbReference type="PIRSF" id="PIRSF039102">
    <property type="entry name" value="Ddl/VanB"/>
    <property type="match status" value="1"/>
</dbReference>
<dbReference type="SUPFAM" id="SSF56059">
    <property type="entry name" value="Glutathione synthetase ATP-binding domain-like"/>
    <property type="match status" value="1"/>
</dbReference>
<dbReference type="SUPFAM" id="SSF52440">
    <property type="entry name" value="PreATP-grasp domain"/>
    <property type="match status" value="1"/>
</dbReference>
<dbReference type="PROSITE" id="PS50975">
    <property type="entry name" value="ATP_GRASP"/>
    <property type="match status" value="1"/>
</dbReference>
<dbReference type="PROSITE" id="PS00843">
    <property type="entry name" value="DALA_DALA_LIGASE_1"/>
    <property type="match status" value="1"/>
</dbReference>
<dbReference type="PROSITE" id="PS00844">
    <property type="entry name" value="DALA_DALA_LIGASE_2"/>
    <property type="match status" value="1"/>
</dbReference>
<name>DDL_MYCTU</name>
<comment type="function">
    <text evidence="2 3 4">Catalyzes the ATP-driven ligation of two D-alanine molecules to form the D-alanyl-D-alanine dipeptide. This molecule is a key building block in peptidoglycan biosynthesis.</text>
</comment>
<comment type="catalytic activity">
    <reaction evidence="2 3 4">
        <text>2 D-alanine + ATP = D-alanyl-D-alanine + ADP + phosphate + H(+)</text>
        <dbReference type="Rhea" id="RHEA:11224"/>
        <dbReference type="ChEBI" id="CHEBI:15378"/>
        <dbReference type="ChEBI" id="CHEBI:30616"/>
        <dbReference type="ChEBI" id="CHEBI:43474"/>
        <dbReference type="ChEBI" id="CHEBI:57416"/>
        <dbReference type="ChEBI" id="CHEBI:57822"/>
        <dbReference type="ChEBI" id="CHEBI:456216"/>
        <dbReference type="EC" id="6.3.2.4"/>
    </reaction>
</comment>
<comment type="cofactor">
    <cofactor evidence="1">
        <name>Mg(2+)</name>
        <dbReference type="ChEBI" id="CHEBI:18420"/>
    </cofactor>
    <cofactor evidence="1">
        <name>Mn(2+)</name>
        <dbReference type="ChEBI" id="CHEBI:29035"/>
    </cofactor>
    <text evidence="1">Binds 2 magnesium or manganese ions per subunit.</text>
</comment>
<comment type="activity regulation">
    <text evidence="3 4">Is inhibited by the antituberculous drug D-cycloserine (DCS), which is a structural analog of D-alanine (PubMed:20956591, PubMed:23286234). Is activated by K(+) (PubMed:23286234).</text>
</comment>
<comment type="biophysicochemical properties">
    <kinetics>
        <KM evidence="4">0.075 mM for D-Ala (first D-Ala binding site) (at pH 7.3)</KM>
        <KM evidence="4">3.6 mM for D-Ala (second D-Ala binding site) (at pH 7.3)</KM>
        <KM evidence="4">0.31 mM for ATP (at pH 7.3)</KM>
        <text evidence="4">kcat is 9.7 sec(-1) (at pH 7.3).</text>
    </kinetics>
</comment>
<comment type="pathway">
    <text evidence="2 7 8">Cell wall biogenesis; peptidoglycan biosynthesis.</text>
</comment>
<comment type="subunit">
    <text evidence="7">Homodimer.</text>
</comment>
<comment type="subcellular location">
    <subcellularLocation>
        <location evidence="2">Cytoplasm</location>
    </subcellularLocation>
</comment>
<comment type="miscellaneous">
    <text evidence="4">Follows an ordered ter-ter mechanism. ATP is the first substrate to bind and is necessary for subsequent binding of D-alanine or DCS. ADP is the final product to dissociate.</text>
</comment>
<comment type="similarity">
    <text evidence="2">Belongs to the D-alanine--D-alanine ligase family.</text>
</comment>
<reference key="1">
    <citation type="journal article" date="1998" name="Nature">
        <title>Deciphering the biology of Mycobacterium tuberculosis from the complete genome sequence.</title>
        <authorList>
            <person name="Cole S.T."/>
            <person name="Brosch R."/>
            <person name="Parkhill J."/>
            <person name="Garnier T."/>
            <person name="Churcher C.M."/>
            <person name="Harris D.E."/>
            <person name="Gordon S.V."/>
            <person name="Eiglmeier K."/>
            <person name="Gas S."/>
            <person name="Barry C.E. III"/>
            <person name="Tekaia F."/>
            <person name="Badcock K."/>
            <person name="Basham D."/>
            <person name="Brown D."/>
            <person name="Chillingworth T."/>
            <person name="Connor R."/>
            <person name="Davies R.M."/>
            <person name="Devlin K."/>
            <person name="Feltwell T."/>
            <person name="Gentles S."/>
            <person name="Hamlin N."/>
            <person name="Holroyd S."/>
            <person name="Hornsby T."/>
            <person name="Jagels K."/>
            <person name="Krogh A."/>
            <person name="McLean J."/>
            <person name="Moule S."/>
            <person name="Murphy L.D."/>
            <person name="Oliver S."/>
            <person name="Osborne J."/>
            <person name="Quail M.A."/>
            <person name="Rajandream M.A."/>
            <person name="Rogers J."/>
            <person name="Rutter S."/>
            <person name="Seeger K."/>
            <person name="Skelton S."/>
            <person name="Squares S."/>
            <person name="Squares R."/>
            <person name="Sulston J.E."/>
            <person name="Taylor K."/>
            <person name="Whitehead S."/>
            <person name="Barrell B.G."/>
        </authorList>
    </citation>
    <scope>NUCLEOTIDE SEQUENCE [LARGE SCALE GENOMIC DNA]</scope>
    <source>
        <strain>ATCC 25618 / H37Rv</strain>
    </source>
</reference>
<reference key="2">
    <citation type="journal article" date="2011" name="Mol. Cell. Proteomics">
        <title>Proteogenomic analysis of Mycobacterium tuberculosis by high resolution mass spectrometry.</title>
        <authorList>
            <person name="Kelkar D.S."/>
            <person name="Kumar D."/>
            <person name="Kumar P."/>
            <person name="Balakrishnan L."/>
            <person name="Muthusamy B."/>
            <person name="Yadav A.K."/>
            <person name="Shrivastava P."/>
            <person name="Marimuthu A."/>
            <person name="Anand S."/>
            <person name="Sundaram H."/>
            <person name="Kingsbury R."/>
            <person name="Harsha H.C."/>
            <person name="Nair B."/>
            <person name="Prasad T.S."/>
            <person name="Chauhan D.S."/>
            <person name="Katoch K."/>
            <person name="Katoch V.M."/>
            <person name="Kumar P."/>
            <person name="Chaerkady R."/>
            <person name="Ramachandran S."/>
            <person name="Dash D."/>
            <person name="Pandey A."/>
        </authorList>
    </citation>
    <scope>IDENTIFICATION BY MASS SPECTROMETRY [LARGE SCALE ANALYSIS]</scope>
    <source>
        <strain>ATCC 25618 / H37Rv</strain>
    </source>
</reference>
<reference key="3">
    <citation type="journal article" date="2013" name="FEBS J.">
        <title>Kinetic mechanism and inhibition of Mycobacterium tuberculosis D-alanine:D-alanine ligase by the antibiotic D-cycloserine.</title>
        <authorList>
            <person name="Prosser G.A."/>
            <person name="de Carvalho L.P."/>
        </authorList>
    </citation>
    <scope>FUNCTION</scope>
    <scope>CATALYTIC ACTIVITY</scope>
    <scope>BIOPHYSICOCHEMICAL PROPERTIES</scope>
    <scope>ACTIVITY REGULATION</scope>
    <scope>KINETIC MECHANISM</scope>
    <scope>PATHWAY</scope>
</reference>
<reference key="4">
    <citation type="journal article" date="2011" name="Antimicrob. Agents Chemother.">
        <title>Structure of the Mycobacterium tuberculosis D-alanine:D-alanine ligase, a target of the antituberculosis drug D-cycloserine.</title>
        <authorList>
            <person name="Bruning J.B."/>
            <person name="Murillo A.C."/>
            <person name="Chacon O."/>
            <person name="Barletta R.G."/>
            <person name="Sacchettini J.C."/>
        </authorList>
    </citation>
    <scope>X-RAY CRYSTALLOGRAPHY (2.10 ANGSTROMS)</scope>
    <scope>FUNCTION</scope>
    <scope>CATALYTIC ACTIVITY</scope>
    <scope>ACTIVITY REGULATION</scope>
    <scope>SUBUNIT</scope>
    <scope>PATHWAY</scope>
    <source>
        <strain>H37Rv</strain>
    </source>
</reference>
<keyword id="KW-0002">3D-structure</keyword>
<keyword id="KW-0067">ATP-binding</keyword>
<keyword id="KW-0133">Cell shape</keyword>
<keyword id="KW-0961">Cell wall biogenesis/degradation</keyword>
<keyword id="KW-0963">Cytoplasm</keyword>
<keyword id="KW-0436">Ligase</keyword>
<keyword id="KW-0460">Magnesium</keyword>
<keyword id="KW-0464">Manganese</keyword>
<keyword id="KW-0479">Metal-binding</keyword>
<keyword id="KW-0547">Nucleotide-binding</keyword>
<keyword id="KW-0573">Peptidoglycan synthesis</keyword>
<keyword id="KW-1185">Reference proteome</keyword>
<gene>
    <name evidence="2 5 6" type="primary">ddl</name>
    <name type="synonym">ddlA</name>
    <name type="ordered locus">Rv2981c</name>
    <name type="ORF">MTCY349.06</name>
</gene>
<protein>
    <recommendedName>
        <fullName evidence="2">D-alanine--D-alanine ligase</fullName>
        <ecNumber evidence="2 3 4">6.3.2.4</ecNumber>
    </recommendedName>
    <alternativeName>
        <fullName evidence="2">D-Ala-D-Ala ligase</fullName>
    </alternativeName>
    <alternativeName>
        <fullName evidence="5 6">D-alanine:D-alanine ligase</fullName>
    </alternativeName>
    <alternativeName>
        <fullName evidence="2">D-alanylalanine synthetase</fullName>
    </alternativeName>
</protein>
<accession>P9WP31</accession>
<accession>L0TBF6</accession>
<accession>P95114</accession>
<proteinExistence type="evidence at protein level"/>